<sequence length="265" mass="29226">MESQLFNAPAKKAFGQHFLVDRYYIDRIIHAITPQPNDHIVEIGPGQGAITLPLLKCCGSLTAIELDRDLIAPLTAAATPLGKLDIIHRDVLTVDLSILAKPGNKKLRLVGNLPYNISSPILFHVLQQAAIIADMHFMLQKEVVDRMAAPPGSKVYGRLSVMLQAWCEVTTMFVVPPDAFQPPPKVNSAITRLVPRDPTTIRIADTKRFSDIVRAAFGQRRKTLRNSLADICTPAHFEHAGIRTNARAEQLEVTEFIALANAKDT</sequence>
<reference key="1">
    <citation type="journal article" date="2000" name="Nature">
        <title>The genome sequence of the plant pathogen Xylella fastidiosa.</title>
        <authorList>
            <person name="Simpson A.J.G."/>
            <person name="Reinach F.C."/>
            <person name="Arruda P."/>
            <person name="Abreu F.A."/>
            <person name="Acencio M."/>
            <person name="Alvarenga R."/>
            <person name="Alves L.M.C."/>
            <person name="Araya J.E."/>
            <person name="Baia G.S."/>
            <person name="Baptista C.S."/>
            <person name="Barros M.H."/>
            <person name="Bonaccorsi E.D."/>
            <person name="Bordin S."/>
            <person name="Bove J.M."/>
            <person name="Briones M.R.S."/>
            <person name="Bueno M.R.P."/>
            <person name="Camargo A.A."/>
            <person name="Camargo L.E.A."/>
            <person name="Carraro D.M."/>
            <person name="Carrer H."/>
            <person name="Colauto N.B."/>
            <person name="Colombo C."/>
            <person name="Costa F.F."/>
            <person name="Costa M.C.R."/>
            <person name="Costa-Neto C.M."/>
            <person name="Coutinho L.L."/>
            <person name="Cristofani M."/>
            <person name="Dias-Neto E."/>
            <person name="Docena C."/>
            <person name="El-Dorry H."/>
            <person name="Facincani A.P."/>
            <person name="Ferreira A.J.S."/>
            <person name="Ferreira V.C.A."/>
            <person name="Ferro J.A."/>
            <person name="Fraga J.S."/>
            <person name="Franca S.C."/>
            <person name="Franco M.C."/>
            <person name="Frohme M."/>
            <person name="Furlan L.R."/>
            <person name="Garnier M."/>
            <person name="Goldman G.H."/>
            <person name="Goldman M.H.S."/>
            <person name="Gomes S.L."/>
            <person name="Gruber A."/>
            <person name="Ho P.L."/>
            <person name="Hoheisel J.D."/>
            <person name="Junqueira M.L."/>
            <person name="Kemper E.L."/>
            <person name="Kitajima J.P."/>
            <person name="Krieger J.E."/>
            <person name="Kuramae E.E."/>
            <person name="Laigret F."/>
            <person name="Lambais M.R."/>
            <person name="Leite L.C.C."/>
            <person name="Lemos E.G.M."/>
            <person name="Lemos M.V.F."/>
            <person name="Lopes S.A."/>
            <person name="Lopes C.R."/>
            <person name="Machado J.A."/>
            <person name="Machado M.A."/>
            <person name="Madeira A.M.B.N."/>
            <person name="Madeira H.M.F."/>
            <person name="Marino C.L."/>
            <person name="Marques M.V."/>
            <person name="Martins E.A.L."/>
            <person name="Martins E.M.F."/>
            <person name="Matsukuma A.Y."/>
            <person name="Menck C.F.M."/>
            <person name="Miracca E.C."/>
            <person name="Miyaki C.Y."/>
            <person name="Monteiro-Vitorello C.B."/>
            <person name="Moon D.H."/>
            <person name="Nagai M.A."/>
            <person name="Nascimento A.L.T.O."/>
            <person name="Netto L.E.S."/>
            <person name="Nhani A. Jr."/>
            <person name="Nobrega F.G."/>
            <person name="Nunes L.R."/>
            <person name="Oliveira M.A."/>
            <person name="de Oliveira M.C."/>
            <person name="de Oliveira R.C."/>
            <person name="Palmieri D.A."/>
            <person name="Paris A."/>
            <person name="Peixoto B.R."/>
            <person name="Pereira G.A.G."/>
            <person name="Pereira H.A. Jr."/>
            <person name="Pesquero J.B."/>
            <person name="Quaggio R.B."/>
            <person name="Roberto P.G."/>
            <person name="Rodrigues V."/>
            <person name="de Rosa A.J.M."/>
            <person name="de Rosa V.E. Jr."/>
            <person name="de Sa R.G."/>
            <person name="Santelli R.V."/>
            <person name="Sawasaki H.E."/>
            <person name="da Silva A.C.R."/>
            <person name="da Silva A.M."/>
            <person name="da Silva F.R."/>
            <person name="Silva W.A. Jr."/>
            <person name="da Silveira J.F."/>
            <person name="Silvestri M.L.Z."/>
            <person name="Siqueira W.J."/>
            <person name="de Souza A.A."/>
            <person name="de Souza A.P."/>
            <person name="Terenzi M.F."/>
            <person name="Truffi D."/>
            <person name="Tsai S.M."/>
            <person name="Tsuhako M.H."/>
            <person name="Vallada H."/>
            <person name="Van Sluys M.A."/>
            <person name="Verjovski-Almeida S."/>
            <person name="Vettore A.L."/>
            <person name="Zago M.A."/>
            <person name="Zatz M."/>
            <person name="Meidanis J."/>
            <person name="Setubal J.C."/>
        </authorList>
    </citation>
    <scope>NUCLEOTIDE SEQUENCE [LARGE SCALE GENOMIC DNA]</scope>
    <source>
        <strain>9a5c</strain>
    </source>
</reference>
<keyword id="KW-0963">Cytoplasm</keyword>
<keyword id="KW-0489">Methyltransferase</keyword>
<keyword id="KW-0694">RNA-binding</keyword>
<keyword id="KW-0698">rRNA processing</keyword>
<keyword id="KW-0949">S-adenosyl-L-methionine</keyword>
<keyword id="KW-0808">Transferase</keyword>
<gene>
    <name evidence="1" type="primary">rsmA</name>
    <name evidence="1" type="synonym">ksgA</name>
    <name type="ordered locus">XF_2148</name>
</gene>
<organism>
    <name type="scientific">Xylella fastidiosa (strain 9a5c)</name>
    <dbReference type="NCBI Taxonomy" id="160492"/>
    <lineage>
        <taxon>Bacteria</taxon>
        <taxon>Pseudomonadati</taxon>
        <taxon>Pseudomonadota</taxon>
        <taxon>Gammaproteobacteria</taxon>
        <taxon>Lysobacterales</taxon>
        <taxon>Lysobacteraceae</taxon>
        <taxon>Xylella</taxon>
    </lineage>
</organism>
<protein>
    <recommendedName>
        <fullName evidence="1">Ribosomal RNA small subunit methyltransferase A</fullName>
        <ecNumber evidence="1">2.1.1.182</ecNumber>
    </recommendedName>
    <alternativeName>
        <fullName evidence="1">16S rRNA (adenine(1518)-N(6)/adenine(1519)-N(6))-dimethyltransferase</fullName>
    </alternativeName>
    <alternativeName>
        <fullName evidence="1">16S rRNA dimethyladenosine transferase</fullName>
    </alternativeName>
    <alternativeName>
        <fullName evidence="1">16S rRNA dimethylase</fullName>
    </alternativeName>
    <alternativeName>
        <fullName evidence="1">S-adenosylmethionine-6-N', N'-adenosyl(rRNA) dimethyltransferase</fullName>
    </alternativeName>
</protein>
<proteinExistence type="inferred from homology"/>
<dbReference type="EC" id="2.1.1.182" evidence="1"/>
<dbReference type="EMBL" id="AE003849">
    <property type="protein sequence ID" value="AAF84947.1"/>
    <property type="status" value="ALT_INIT"/>
    <property type="molecule type" value="Genomic_DNA"/>
</dbReference>
<dbReference type="PIR" id="H82593">
    <property type="entry name" value="H82593"/>
</dbReference>
<dbReference type="RefSeq" id="WP_031336483.1">
    <property type="nucleotide sequence ID" value="NC_002488.3"/>
</dbReference>
<dbReference type="SMR" id="Q9PBJ6"/>
<dbReference type="STRING" id="160492.XF_2148"/>
<dbReference type="KEGG" id="xfa:XF_2148"/>
<dbReference type="eggNOG" id="COG0030">
    <property type="taxonomic scope" value="Bacteria"/>
</dbReference>
<dbReference type="HOGENOM" id="CLU_041220_0_1_6"/>
<dbReference type="Proteomes" id="UP000000812">
    <property type="component" value="Chromosome"/>
</dbReference>
<dbReference type="GO" id="GO:0005829">
    <property type="term" value="C:cytosol"/>
    <property type="evidence" value="ECO:0007669"/>
    <property type="project" value="TreeGrafter"/>
</dbReference>
<dbReference type="GO" id="GO:0052908">
    <property type="term" value="F:16S rRNA (adenine(1518)-N(6)/adenine(1519)-N(6))-dimethyltransferase activity"/>
    <property type="evidence" value="ECO:0007669"/>
    <property type="project" value="UniProtKB-EC"/>
</dbReference>
<dbReference type="GO" id="GO:0003723">
    <property type="term" value="F:RNA binding"/>
    <property type="evidence" value="ECO:0007669"/>
    <property type="project" value="UniProtKB-KW"/>
</dbReference>
<dbReference type="FunFam" id="1.10.8.100:FF:000001">
    <property type="entry name" value="Ribosomal RNA small subunit methyltransferase A"/>
    <property type="match status" value="1"/>
</dbReference>
<dbReference type="Gene3D" id="1.10.8.100">
    <property type="entry name" value="Ribosomal RNA adenine dimethylase-like, domain 2"/>
    <property type="match status" value="1"/>
</dbReference>
<dbReference type="Gene3D" id="3.40.50.150">
    <property type="entry name" value="Vaccinia Virus protein VP39"/>
    <property type="match status" value="1"/>
</dbReference>
<dbReference type="HAMAP" id="MF_00607">
    <property type="entry name" value="16SrRNA_methyltr_A"/>
    <property type="match status" value="1"/>
</dbReference>
<dbReference type="InterPro" id="IPR001737">
    <property type="entry name" value="KsgA/Erm"/>
</dbReference>
<dbReference type="InterPro" id="IPR023165">
    <property type="entry name" value="rRNA_Ade_diMease-like_C"/>
</dbReference>
<dbReference type="InterPro" id="IPR020596">
    <property type="entry name" value="rRNA_Ade_Mease_Trfase_CS"/>
</dbReference>
<dbReference type="InterPro" id="IPR020598">
    <property type="entry name" value="rRNA_Ade_methylase_Trfase_N"/>
</dbReference>
<dbReference type="InterPro" id="IPR011530">
    <property type="entry name" value="rRNA_adenine_dimethylase"/>
</dbReference>
<dbReference type="InterPro" id="IPR029063">
    <property type="entry name" value="SAM-dependent_MTases_sf"/>
</dbReference>
<dbReference type="NCBIfam" id="TIGR00755">
    <property type="entry name" value="ksgA"/>
    <property type="match status" value="1"/>
</dbReference>
<dbReference type="PANTHER" id="PTHR11727">
    <property type="entry name" value="DIMETHYLADENOSINE TRANSFERASE"/>
    <property type="match status" value="1"/>
</dbReference>
<dbReference type="PANTHER" id="PTHR11727:SF7">
    <property type="entry name" value="DIMETHYLADENOSINE TRANSFERASE-RELATED"/>
    <property type="match status" value="1"/>
</dbReference>
<dbReference type="Pfam" id="PF00398">
    <property type="entry name" value="RrnaAD"/>
    <property type="match status" value="1"/>
</dbReference>
<dbReference type="SMART" id="SM00650">
    <property type="entry name" value="rADc"/>
    <property type="match status" value="1"/>
</dbReference>
<dbReference type="SUPFAM" id="SSF53335">
    <property type="entry name" value="S-adenosyl-L-methionine-dependent methyltransferases"/>
    <property type="match status" value="1"/>
</dbReference>
<dbReference type="PROSITE" id="PS01131">
    <property type="entry name" value="RRNA_A_DIMETH"/>
    <property type="match status" value="1"/>
</dbReference>
<dbReference type="PROSITE" id="PS51689">
    <property type="entry name" value="SAM_RNA_A_N6_MT"/>
    <property type="match status" value="1"/>
</dbReference>
<accession>Q9PBJ6</accession>
<name>RSMA_XYLFA</name>
<feature type="chain" id="PRO_0000101646" description="Ribosomal RNA small subunit methyltransferase A">
    <location>
        <begin position="1"/>
        <end position="265"/>
    </location>
</feature>
<feature type="binding site" evidence="1">
    <location>
        <position position="17"/>
    </location>
    <ligand>
        <name>S-adenosyl-L-methionine</name>
        <dbReference type="ChEBI" id="CHEBI:59789"/>
    </ligand>
</feature>
<feature type="binding site" evidence="1">
    <location>
        <position position="19"/>
    </location>
    <ligand>
        <name>S-adenosyl-L-methionine</name>
        <dbReference type="ChEBI" id="CHEBI:59789"/>
    </ligand>
</feature>
<feature type="binding site" evidence="1">
    <location>
        <position position="44"/>
    </location>
    <ligand>
        <name>S-adenosyl-L-methionine</name>
        <dbReference type="ChEBI" id="CHEBI:59789"/>
    </ligand>
</feature>
<feature type="binding site" evidence="1">
    <location>
        <position position="65"/>
    </location>
    <ligand>
        <name>S-adenosyl-L-methionine</name>
        <dbReference type="ChEBI" id="CHEBI:59789"/>
    </ligand>
</feature>
<feature type="binding site" evidence="1">
    <location>
        <position position="90"/>
    </location>
    <ligand>
        <name>S-adenosyl-L-methionine</name>
        <dbReference type="ChEBI" id="CHEBI:59789"/>
    </ligand>
</feature>
<feature type="binding site" evidence="1">
    <location>
        <position position="112"/>
    </location>
    <ligand>
        <name>S-adenosyl-L-methionine</name>
        <dbReference type="ChEBI" id="CHEBI:59789"/>
    </ligand>
</feature>
<evidence type="ECO:0000255" key="1">
    <source>
        <dbReference type="HAMAP-Rule" id="MF_00607"/>
    </source>
</evidence>
<evidence type="ECO:0000305" key="2"/>
<comment type="function">
    <text evidence="1">Specifically dimethylates two adjacent adenosines (A1518 and A1519) in the loop of a conserved hairpin near the 3'-end of 16S rRNA in the 30S particle. May play a critical role in biogenesis of 30S subunits.</text>
</comment>
<comment type="catalytic activity">
    <reaction evidence="1">
        <text>adenosine(1518)/adenosine(1519) in 16S rRNA + 4 S-adenosyl-L-methionine = N(6)-dimethyladenosine(1518)/N(6)-dimethyladenosine(1519) in 16S rRNA + 4 S-adenosyl-L-homocysteine + 4 H(+)</text>
        <dbReference type="Rhea" id="RHEA:19609"/>
        <dbReference type="Rhea" id="RHEA-COMP:10232"/>
        <dbReference type="Rhea" id="RHEA-COMP:10233"/>
        <dbReference type="ChEBI" id="CHEBI:15378"/>
        <dbReference type="ChEBI" id="CHEBI:57856"/>
        <dbReference type="ChEBI" id="CHEBI:59789"/>
        <dbReference type="ChEBI" id="CHEBI:74411"/>
        <dbReference type="ChEBI" id="CHEBI:74493"/>
        <dbReference type="EC" id="2.1.1.182"/>
    </reaction>
</comment>
<comment type="subcellular location">
    <subcellularLocation>
        <location evidence="1">Cytoplasm</location>
    </subcellularLocation>
</comment>
<comment type="similarity">
    <text evidence="1">Belongs to the class I-like SAM-binding methyltransferase superfamily. rRNA adenine N(6)-methyltransferase family. RsmA subfamily.</text>
</comment>
<comment type="sequence caution" evidence="2">
    <conflict type="erroneous initiation">
        <sequence resource="EMBL-CDS" id="AAF84947"/>
    </conflict>
</comment>